<evidence type="ECO:0000256" key="1">
    <source>
        <dbReference type="SAM" id="MobiDB-lite"/>
    </source>
</evidence>
<evidence type="ECO:0000303" key="2">
    <source>
    </source>
</evidence>
<evidence type="ECO:0000303" key="3">
    <source ref="2"/>
</evidence>
<evidence type="ECO:0000305" key="4"/>
<evidence type="ECO:0000312" key="5">
    <source>
        <dbReference type="MGI" id="MGI:1926029"/>
    </source>
</evidence>
<evidence type="ECO:0007744" key="6">
    <source>
    </source>
</evidence>
<dbReference type="EMBL" id="AK081234">
    <property type="protein sequence ID" value="BAC38172.1"/>
    <property type="molecule type" value="mRNA"/>
</dbReference>
<dbReference type="EMBL" id="AK139339">
    <property type="protein sequence ID" value="BAE23965.1"/>
    <property type="molecule type" value="mRNA"/>
</dbReference>
<dbReference type="EMBL" id="AK170267">
    <property type="protein sequence ID" value="BAE41672.1"/>
    <property type="molecule type" value="mRNA"/>
</dbReference>
<dbReference type="EMBL" id="AK220503">
    <property type="protein sequence ID" value="BAD90513.1"/>
    <property type="status" value="ALT_INIT"/>
    <property type="molecule type" value="mRNA"/>
</dbReference>
<dbReference type="CCDS" id="CCDS22752.1">
    <molecule id="Q8BNN1-1"/>
</dbReference>
<dbReference type="RefSeq" id="NP_001344229.1">
    <molecule id="Q8BNN1-1"/>
    <property type="nucleotide sequence ID" value="NM_001357300.1"/>
</dbReference>
<dbReference type="RefSeq" id="NP_001344230.1">
    <molecule id="Q8BNN1-1"/>
    <property type="nucleotide sequence ID" value="NM_001357301.1"/>
</dbReference>
<dbReference type="RefSeq" id="NP_084452.2">
    <molecule id="Q8BNN1-1"/>
    <property type="nucleotide sequence ID" value="NM_030176.2"/>
</dbReference>
<dbReference type="RefSeq" id="XP_006531567.1">
    <molecule id="Q8BNN1-1"/>
    <property type="nucleotide sequence ID" value="XM_006531504.5"/>
</dbReference>
<dbReference type="RefSeq" id="XP_006531568.1">
    <property type="nucleotide sequence ID" value="XM_006531505.3"/>
</dbReference>
<dbReference type="SMR" id="Q8BNN1"/>
<dbReference type="BioGRID" id="219625">
    <property type="interactions" value="1"/>
</dbReference>
<dbReference type="FunCoup" id="Q8BNN1">
    <property type="interactions" value="406"/>
</dbReference>
<dbReference type="IntAct" id="Q8BNN1">
    <property type="interactions" value="1"/>
</dbReference>
<dbReference type="MINT" id="Q8BNN1"/>
<dbReference type="STRING" id="10090.ENSMUSP00000130306"/>
<dbReference type="GlyGen" id="Q8BNN1">
    <property type="glycosylation" value="2 sites, 1 O-linked glycan (1 site)"/>
</dbReference>
<dbReference type="iPTMnet" id="Q8BNN1"/>
<dbReference type="PhosphoSitePlus" id="Q8BNN1"/>
<dbReference type="PaxDb" id="10090-ENSMUSP00000130306"/>
<dbReference type="ProteomicsDB" id="263302">
    <molecule id="Q8BNN1-1"/>
</dbReference>
<dbReference type="ProteomicsDB" id="263303">
    <molecule id="Q8BNN1-2"/>
</dbReference>
<dbReference type="Antibodypedia" id="30904">
    <property type="antibodies" value="366 antibodies from 20 providers"/>
</dbReference>
<dbReference type="DNASU" id="78779"/>
<dbReference type="Ensembl" id="ENSMUST00000098327.2">
    <molecule id="Q8BNN1-1"/>
    <property type="protein sequence ID" value="ENSMUSP00000095932.2"/>
    <property type="gene ID" value="ENSMUSG00000033594.12"/>
</dbReference>
<dbReference type="Ensembl" id="ENSMUST00000166768.3">
    <molecule id="Q8BNN1-1"/>
    <property type="protein sequence ID" value="ENSMUSP00000130306.2"/>
    <property type="gene ID" value="ENSMUSG00000033594.12"/>
</dbReference>
<dbReference type="GeneID" id="78779"/>
<dbReference type="KEGG" id="mmu:78779"/>
<dbReference type="UCSC" id="uc009nup.1">
    <molecule id="Q8BNN1-1"/>
    <property type="organism name" value="mouse"/>
</dbReference>
<dbReference type="AGR" id="MGI:1926029"/>
<dbReference type="CTD" id="124044"/>
<dbReference type="MGI" id="MGI:1926029">
    <property type="gene designation" value="Spata2l"/>
</dbReference>
<dbReference type="VEuPathDB" id="HostDB:ENSMUSG00000033594"/>
<dbReference type="eggNOG" id="ENOG502S1TH">
    <property type="taxonomic scope" value="Eukaryota"/>
</dbReference>
<dbReference type="GeneTree" id="ENSGT00530000063956"/>
<dbReference type="HOGENOM" id="CLU_047839_0_0_1"/>
<dbReference type="InParanoid" id="Q8BNN1"/>
<dbReference type="OMA" id="LPTCRPG"/>
<dbReference type="OrthoDB" id="9837000at2759"/>
<dbReference type="PhylomeDB" id="Q8BNN1"/>
<dbReference type="TreeFam" id="TF328840"/>
<dbReference type="BioGRID-ORCS" id="78779">
    <property type="hits" value="1 hit in 76 CRISPR screens"/>
</dbReference>
<dbReference type="CD-CODE" id="CE726F99">
    <property type="entry name" value="Postsynaptic density"/>
</dbReference>
<dbReference type="PRO" id="PR:Q8BNN1"/>
<dbReference type="Proteomes" id="UP000000589">
    <property type="component" value="Chromosome 8"/>
</dbReference>
<dbReference type="RNAct" id="Q8BNN1">
    <property type="molecule type" value="protein"/>
</dbReference>
<dbReference type="Bgee" id="ENSMUSG00000033594">
    <property type="expression patterns" value="Expressed in caudate-putamen and 116 other cell types or tissues"/>
</dbReference>
<dbReference type="ExpressionAtlas" id="Q8BNN1">
    <property type="expression patterns" value="baseline and differential"/>
</dbReference>
<dbReference type="Gene3D" id="1.20.58.2190">
    <property type="match status" value="1"/>
</dbReference>
<dbReference type="InterPro" id="IPR048839">
    <property type="entry name" value="SPATA2_PUB-like"/>
</dbReference>
<dbReference type="PANTHER" id="PTHR15326:SF7">
    <property type="entry name" value="SPERMATOGENESIS-ASSOCIATED PROTEIN 2-LIKE PROTEIN"/>
    <property type="match status" value="1"/>
</dbReference>
<dbReference type="PANTHER" id="PTHR15326">
    <property type="entry name" value="SPERMATOGENESIS-ASSOCIATED PROTEIN 2/TAMOZHENNIC"/>
    <property type="match status" value="1"/>
</dbReference>
<dbReference type="Pfam" id="PF21388">
    <property type="entry name" value="SPATA2_PUB-like"/>
    <property type="match status" value="1"/>
</dbReference>
<protein>
    <recommendedName>
        <fullName evidence="4">Spermatogenesis-associated protein 2-like protein</fullName>
        <shortName evidence="4">SPATA2-like protein</shortName>
    </recommendedName>
</protein>
<keyword id="KW-0025">Alternative splicing</keyword>
<keyword id="KW-0597">Phosphoprotein</keyword>
<keyword id="KW-1185">Reference proteome</keyword>
<gene>
    <name evidence="5" type="primary">Spata2l</name>
    <name evidence="3" type="synonym">Kiaa4138</name>
</gene>
<name>SPA2L_MOUSE</name>
<reference key="1">
    <citation type="journal article" date="2005" name="Science">
        <title>The transcriptional landscape of the mammalian genome.</title>
        <authorList>
            <person name="Carninci P."/>
            <person name="Kasukawa T."/>
            <person name="Katayama S."/>
            <person name="Gough J."/>
            <person name="Frith M.C."/>
            <person name="Maeda N."/>
            <person name="Oyama R."/>
            <person name="Ravasi T."/>
            <person name="Lenhard B."/>
            <person name="Wells C."/>
            <person name="Kodzius R."/>
            <person name="Shimokawa K."/>
            <person name="Bajic V.B."/>
            <person name="Brenner S.E."/>
            <person name="Batalov S."/>
            <person name="Forrest A.R."/>
            <person name="Zavolan M."/>
            <person name="Davis M.J."/>
            <person name="Wilming L.G."/>
            <person name="Aidinis V."/>
            <person name="Allen J.E."/>
            <person name="Ambesi-Impiombato A."/>
            <person name="Apweiler R."/>
            <person name="Aturaliya R.N."/>
            <person name="Bailey T.L."/>
            <person name="Bansal M."/>
            <person name="Baxter L."/>
            <person name="Beisel K.W."/>
            <person name="Bersano T."/>
            <person name="Bono H."/>
            <person name="Chalk A.M."/>
            <person name="Chiu K.P."/>
            <person name="Choudhary V."/>
            <person name="Christoffels A."/>
            <person name="Clutterbuck D.R."/>
            <person name="Crowe M.L."/>
            <person name="Dalla E."/>
            <person name="Dalrymple B.P."/>
            <person name="de Bono B."/>
            <person name="Della Gatta G."/>
            <person name="di Bernardo D."/>
            <person name="Down T."/>
            <person name="Engstrom P."/>
            <person name="Fagiolini M."/>
            <person name="Faulkner G."/>
            <person name="Fletcher C.F."/>
            <person name="Fukushima T."/>
            <person name="Furuno M."/>
            <person name="Futaki S."/>
            <person name="Gariboldi M."/>
            <person name="Georgii-Hemming P."/>
            <person name="Gingeras T.R."/>
            <person name="Gojobori T."/>
            <person name="Green R.E."/>
            <person name="Gustincich S."/>
            <person name="Harbers M."/>
            <person name="Hayashi Y."/>
            <person name="Hensch T.K."/>
            <person name="Hirokawa N."/>
            <person name="Hill D."/>
            <person name="Huminiecki L."/>
            <person name="Iacono M."/>
            <person name="Ikeo K."/>
            <person name="Iwama A."/>
            <person name="Ishikawa T."/>
            <person name="Jakt M."/>
            <person name="Kanapin A."/>
            <person name="Katoh M."/>
            <person name="Kawasawa Y."/>
            <person name="Kelso J."/>
            <person name="Kitamura H."/>
            <person name="Kitano H."/>
            <person name="Kollias G."/>
            <person name="Krishnan S.P."/>
            <person name="Kruger A."/>
            <person name="Kummerfeld S.K."/>
            <person name="Kurochkin I.V."/>
            <person name="Lareau L.F."/>
            <person name="Lazarevic D."/>
            <person name="Lipovich L."/>
            <person name="Liu J."/>
            <person name="Liuni S."/>
            <person name="McWilliam S."/>
            <person name="Madan Babu M."/>
            <person name="Madera M."/>
            <person name="Marchionni L."/>
            <person name="Matsuda H."/>
            <person name="Matsuzawa S."/>
            <person name="Miki H."/>
            <person name="Mignone F."/>
            <person name="Miyake S."/>
            <person name="Morris K."/>
            <person name="Mottagui-Tabar S."/>
            <person name="Mulder N."/>
            <person name="Nakano N."/>
            <person name="Nakauchi H."/>
            <person name="Ng P."/>
            <person name="Nilsson R."/>
            <person name="Nishiguchi S."/>
            <person name="Nishikawa S."/>
            <person name="Nori F."/>
            <person name="Ohara O."/>
            <person name="Okazaki Y."/>
            <person name="Orlando V."/>
            <person name="Pang K.C."/>
            <person name="Pavan W.J."/>
            <person name="Pavesi G."/>
            <person name="Pesole G."/>
            <person name="Petrovsky N."/>
            <person name="Piazza S."/>
            <person name="Reed J."/>
            <person name="Reid J.F."/>
            <person name="Ring B.Z."/>
            <person name="Ringwald M."/>
            <person name="Rost B."/>
            <person name="Ruan Y."/>
            <person name="Salzberg S.L."/>
            <person name="Sandelin A."/>
            <person name="Schneider C."/>
            <person name="Schoenbach C."/>
            <person name="Sekiguchi K."/>
            <person name="Semple C.A."/>
            <person name="Seno S."/>
            <person name="Sessa L."/>
            <person name="Sheng Y."/>
            <person name="Shibata Y."/>
            <person name="Shimada H."/>
            <person name="Shimada K."/>
            <person name="Silva D."/>
            <person name="Sinclair B."/>
            <person name="Sperling S."/>
            <person name="Stupka E."/>
            <person name="Sugiura K."/>
            <person name="Sultana R."/>
            <person name="Takenaka Y."/>
            <person name="Taki K."/>
            <person name="Tammoja K."/>
            <person name="Tan S.L."/>
            <person name="Tang S."/>
            <person name="Taylor M.S."/>
            <person name="Tegner J."/>
            <person name="Teichmann S.A."/>
            <person name="Ueda H.R."/>
            <person name="van Nimwegen E."/>
            <person name="Verardo R."/>
            <person name="Wei C.L."/>
            <person name="Yagi K."/>
            <person name="Yamanishi H."/>
            <person name="Zabarovsky E."/>
            <person name="Zhu S."/>
            <person name="Zimmer A."/>
            <person name="Hide W."/>
            <person name="Bult C."/>
            <person name="Grimmond S.M."/>
            <person name="Teasdale R.D."/>
            <person name="Liu E.T."/>
            <person name="Brusic V."/>
            <person name="Quackenbush J."/>
            <person name="Wahlestedt C."/>
            <person name="Mattick J.S."/>
            <person name="Hume D.A."/>
            <person name="Kai C."/>
            <person name="Sasaki D."/>
            <person name="Tomaru Y."/>
            <person name="Fukuda S."/>
            <person name="Kanamori-Katayama M."/>
            <person name="Suzuki M."/>
            <person name="Aoki J."/>
            <person name="Arakawa T."/>
            <person name="Iida J."/>
            <person name="Imamura K."/>
            <person name="Itoh M."/>
            <person name="Kato T."/>
            <person name="Kawaji H."/>
            <person name="Kawagashira N."/>
            <person name="Kawashima T."/>
            <person name="Kojima M."/>
            <person name="Kondo S."/>
            <person name="Konno H."/>
            <person name="Nakano K."/>
            <person name="Ninomiya N."/>
            <person name="Nishio T."/>
            <person name="Okada M."/>
            <person name="Plessy C."/>
            <person name="Shibata K."/>
            <person name="Shiraki T."/>
            <person name="Suzuki S."/>
            <person name="Tagami M."/>
            <person name="Waki K."/>
            <person name="Watahiki A."/>
            <person name="Okamura-Oho Y."/>
            <person name="Suzuki H."/>
            <person name="Kawai J."/>
            <person name="Hayashizaki Y."/>
        </authorList>
    </citation>
    <scope>NUCLEOTIDE SEQUENCE [LARGE SCALE MRNA] (ISOFORMS 1 AND 2)</scope>
    <source>
        <strain>C57BL/6J</strain>
        <strain>NOD</strain>
        <tissue>Brain cortex</tissue>
        <tissue>Corpus striatum</tissue>
        <tissue>Dendritic cell</tissue>
    </source>
</reference>
<reference key="2">
    <citation type="submission" date="2005-02" db="EMBL/GenBank/DDBJ databases">
        <title>Prediction of the coding sequences of mouse homologues of KIAA gene. The complete nucleotide sequences of mouse KIAA-homologous cDNAs identified by screening of terminal sequences of cDNA clones randomly sampled from size-fractionated libraries.</title>
        <authorList>
            <person name="Okazaki N."/>
            <person name="Kikuno R.F."/>
            <person name="Ohara R."/>
            <person name="Inamoto S."/>
            <person name="Nagase T."/>
            <person name="Ohara O."/>
            <person name="Koga H."/>
        </authorList>
    </citation>
    <scope>NUCLEOTIDE SEQUENCE [LARGE SCALE MRNA] (ISOFORM 1)</scope>
    <source>
        <tissue>Fetal brain</tissue>
    </source>
</reference>
<reference key="3">
    <citation type="journal article" date="2010" name="Cell">
        <title>A tissue-specific atlas of mouse protein phosphorylation and expression.</title>
        <authorList>
            <person name="Huttlin E.L."/>
            <person name="Jedrychowski M.P."/>
            <person name="Elias J.E."/>
            <person name="Goswami T."/>
            <person name="Rad R."/>
            <person name="Beausoleil S.A."/>
            <person name="Villen J."/>
            <person name="Haas W."/>
            <person name="Sowa M.E."/>
            <person name="Gygi S.P."/>
        </authorList>
    </citation>
    <scope>PHOSPHORYLATION [LARGE SCALE ANALYSIS] AT SER-318 AND SER-326</scope>
    <scope>IDENTIFICATION BY MASS SPECTROMETRY [LARGE SCALE ANALYSIS]</scope>
    <source>
        <tissue>Brain</tissue>
        <tissue>Kidney</tissue>
    </source>
</reference>
<comment type="alternative products">
    <event type="alternative splicing"/>
    <isoform>
        <id>Q8BNN1-1</id>
        <name>1</name>
        <sequence type="displayed"/>
    </isoform>
    <isoform>
        <id>Q8BNN1-2</id>
        <name>2</name>
        <sequence type="described" ref="VSP_027334 VSP_027335"/>
    </isoform>
</comment>
<comment type="similarity">
    <text evidence="4">Belongs to the SPATA2 family.</text>
</comment>
<comment type="sequence caution" evidence="4">
    <conflict type="erroneous initiation">
        <sequence resource="EMBL-CDS" id="BAD90513"/>
    </conflict>
</comment>
<organism>
    <name type="scientific">Mus musculus</name>
    <name type="common">Mouse</name>
    <dbReference type="NCBI Taxonomy" id="10090"/>
    <lineage>
        <taxon>Eukaryota</taxon>
        <taxon>Metazoa</taxon>
        <taxon>Chordata</taxon>
        <taxon>Craniata</taxon>
        <taxon>Vertebrata</taxon>
        <taxon>Euteleostomi</taxon>
        <taxon>Mammalia</taxon>
        <taxon>Eutheria</taxon>
        <taxon>Euarchontoglires</taxon>
        <taxon>Glires</taxon>
        <taxon>Rodentia</taxon>
        <taxon>Myomorpha</taxon>
        <taxon>Muroidea</taxon>
        <taxon>Muridae</taxon>
        <taxon>Murinae</taxon>
        <taxon>Mus</taxon>
        <taxon>Mus</taxon>
    </lineage>
</organism>
<proteinExistence type="evidence at protein level"/>
<feature type="chain" id="PRO_0000297671" description="Spermatogenesis-associated protein 2-like protein">
    <location>
        <begin position="1"/>
        <end position="426"/>
    </location>
</feature>
<feature type="region of interest" description="Disordered" evidence="1">
    <location>
        <begin position="204"/>
        <end position="223"/>
    </location>
</feature>
<feature type="region of interest" description="Disordered" evidence="1">
    <location>
        <begin position="234"/>
        <end position="256"/>
    </location>
</feature>
<feature type="region of interest" description="Disordered" evidence="1">
    <location>
        <begin position="269"/>
        <end position="300"/>
    </location>
</feature>
<feature type="region of interest" description="Disordered" evidence="1">
    <location>
        <begin position="316"/>
        <end position="347"/>
    </location>
</feature>
<feature type="modified residue" description="Phosphoserine" evidence="6">
    <location>
        <position position="318"/>
    </location>
</feature>
<feature type="modified residue" description="Phosphoserine" evidence="6">
    <location>
        <position position="326"/>
    </location>
</feature>
<feature type="splice variant" id="VSP_027334" description="In isoform 2." evidence="2">
    <original>TFSGGYVHVLKGVLSEELLTRSFQKMGYVRRDNHRLMVTTPPPACQLVQVALG</original>
    <variation>LYNQVDLVDLGSAREEGLMGQQLCQDAADSPVEAADLHLATNQHTREEAGKWP</variation>
    <location>
        <begin position="102"/>
        <end position="154"/>
    </location>
</feature>
<feature type="splice variant" id="VSP_027335" description="In isoform 2." evidence="2">
    <location>
        <begin position="155"/>
        <end position="426"/>
    </location>
</feature>
<feature type="sequence conflict" description="In Ref. 2; BAD90513." evidence="4" ref="2">
    <original>G</original>
    <variation>R</variation>
    <location>
        <position position="331"/>
    </location>
</feature>
<sequence>MGSSSLSEDYRQCLERELRRGRAGVCGDPSLRAVLWQILVEDFDLHGALQDDALALFTDGLWGRADLAPALQDLARAFELLELAAVHLYLLPWRKEFTTIKTFSGGYVHVLKGVLSEELLTRSFQKMGYVRRDNHRLMVTTPPPACQLVQVALGCFALRLECEILSEVLTQLGTSVLPAEELLRARRASGDVASCVAWLQQRLAQDEEPPPLPPRGTPATYGAPVDLYQDLQEDESSEASLYGEPSPGLDSPPVELAYRPPLWEQSAKLWGSGGQPWEPPADDMHRASSPPYGALEEELEPEPSAFSFLSLRRELSRSGDLAPPESPSSPGQASPRHRQAEAAASSAYGPAVEPLSYQAHSCLSPGNLPTLCCDTCRQLHATHCTALSACRPTHSLRILLGDNQRRLWLQRAQVDNLLYDSPGAHP</sequence>
<accession>Q8BNN1</accession>
<accession>Q3UTL5</accession>
<accession>Q5DTL7</accession>